<feature type="chain" id="PRO_0000300670" description="Low molecular weight protein-tyrosine-phosphatase PtpB">
    <location>
        <begin position="1"/>
        <end position="139"/>
    </location>
</feature>
<feature type="active site" description="Nucleophile" evidence="1">
    <location>
        <position position="7"/>
    </location>
</feature>
<feature type="active site" evidence="1">
    <location>
        <position position="13"/>
    </location>
</feature>
<feature type="active site" description="Proton donor" evidence="1">
    <location>
        <position position="111"/>
    </location>
</feature>
<dbReference type="EC" id="3.1.3.48"/>
<dbReference type="RefSeq" id="WP_000697334.1">
    <property type="nucleotide sequence ID" value="NZ_WYDB01000008.1"/>
</dbReference>
<dbReference type="SMR" id="P0C5D3"/>
<dbReference type="OMA" id="AMTHQHK"/>
<dbReference type="GO" id="GO:0004725">
    <property type="term" value="F:protein tyrosine phosphatase activity"/>
    <property type="evidence" value="ECO:0007669"/>
    <property type="project" value="UniProtKB-EC"/>
</dbReference>
<dbReference type="CDD" id="cd16344">
    <property type="entry name" value="LMWPAP"/>
    <property type="match status" value="1"/>
</dbReference>
<dbReference type="Gene3D" id="3.40.50.2300">
    <property type="match status" value="1"/>
</dbReference>
<dbReference type="InterPro" id="IPR050438">
    <property type="entry name" value="LMW_PTPase"/>
</dbReference>
<dbReference type="InterPro" id="IPR023485">
    <property type="entry name" value="Ptyr_pPase"/>
</dbReference>
<dbReference type="InterPro" id="IPR036196">
    <property type="entry name" value="Ptyr_pPase_sf"/>
</dbReference>
<dbReference type="InterPro" id="IPR017867">
    <property type="entry name" value="Tyr_phospatase_low_mol_wt"/>
</dbReference>
<dbReference type="PANTHER" id="PTHR11717">
    <property type="entry name" value="LOW MOLECULAR WEIGHT PROTEIN TYROSINE PHOSPHATASE"/>
    <property type="match status" value="1"/>
</dbReference>
<dbReference type="PANTHER" id="PTHR11717:SF31">
    <property type="entry name" value="LOW MOLECULAR WEIGHT PROTEIN-TYROSINE-PHOSPHATASE ETP-RELATED"/>
    <property type="match status" value="1"/>
</dbReference>
<dbReference type="Pfam" id="PF01451">
    <property type="entry name" value="LMWPc"/>
    <property type="match status" value="1"/>
</dbReference>
<dbReference type="PRINTS" id="PR00719">
    <property type="entry name" value="LMWPTPASE"/>
</dbReference>
<dbReference type="SMART" id="SM00226">
    <property type="entry name" value="LMWPc"/>
    <property type="match status" value="1"/>
</dbReference>
<dbReference type="SUPFAM" id="SSF52788">
    <property type="entry name" value="Phosphotyrosine protein phosphatases I"/>
    <property type="match status" value="1"/>
</dbReference>
<accession>P0C5D3</accession>
<reference key="1">
    <citation type="journal article" date="2002" name="J. Bacteriol.">
        <title>Staphylococcus aureus contains two low-molecular-mass phosphotyrosine protein phosphatases.</title>
        <authorList>
            <person name="Soulat D."/>
            <person name="Vaganay E."/>
            <person name="Duclos B."/>
            <person name="Genestier A.-L."/>
            <person name="Etienne J."/>
            <person name="Cozzone A.J."/>
        </authorList>
    </citation>
    <scope>NUCLEOTIDE SEQUENCE [GENOMIC DNA]</scope>
    <scope>CHARACTERIZATION</scope>
    <scope>CATALYTIC ACTIVITY</scope>
    <scope>ACTIVITY REGULATION</scope>
    <scope>BIOPHYSICOCHEMICAL PROPERTIES</scope>
    <source>
        <strain>Reynolds</strain>
    </source>
</reference>
<organism>
    <name type="scientific">Staphylococcus aureus</name>
    <dbReference type="NCBI Taxonomy" id="1280"/>
    <lineage>
        <taxon>Bacteria</taxon>
        <taxon>Bacillati</taxon>
        <taxon>Bacillota</taxon>
        <taxon>Bacilli</taxon>
        <taxon>Bacillales</taxon>
        <taxon>Staphylococcaceae</taxon>
        <taxon>Staphylococcus</taxon>
    </lineage>
</organism>
<comment type="function">
    <text>Dephosphorylates the phosphotyrosine-containing proteins.</text>
</comment>
<comment type="catalytic activity">
    <reaction evidence="2">
        <text>O-phospho-L-tyrosyl-[protein] + H2O = L-tyrosyl-[protein] + phosphate</text>
        <dbReference type="Rhea" id="RHEA:10684"/>
        <dbReference type="Rhea" id="RHEA-COMP:10136"/>
        <dbReference type="Rhea" id="RHEA-COMP:20101"/>
        <dbReference type="ChEBI" id="CHEBI:15377"/>
        <dbReference type="ChEBI" id="CHEBI:43474"/>
        <dbReference type="ChEBI" id="CHEBI:46858"/>
        <dbReference type="ChEBI" id="CHEBI:61978"/>
        <dbReference type="EC" id="3.1.3.48"/>
    </reaction>
</comment>
<comment type="activity regulation">
    <text evidence="2">Inhibited by N-ethylmaleimide and sodium orthovanadate.</text>
</comment>
<comment type="biophysicochemical properties">
    <kinetics>
        <KM evidence="2">1.5 mM for p-nitrophenyl-phosphate (at pH 6.2 and 37 degrees Celsius)</KM>
        <Vmax evidence="2">1.4 umol/min/mg enzyme (at pH 6.2 and 37 degrees Celsius)</Vmax>
    </kinetics>
    <phDependence>
        <text evidence="2">Optimum pH is 5.7-6.5.</text>
    </phDependence>
    <temperatureDependence>
        <text evidence="2">Optimum temperature is about 40 degrees Celsius.</text>
    </temperatureDependence>
</comment>
<comment type="similarity">
    <text evidence="3">Belongs to the low molecular weight phosphotyrosine protein phosphatase family.</text>
</comment>
<sequence length="139" mass="15788">MKILFVCTGNTCRSPLAESIAKEVMPNHQFESRGIFAVNNQGVSNYVEDLVEEHHLAETTLSQQFTEADLKADIILTMSYSHKELIEAHFGLQNHVFTLHEYVKEAGEVIDPYGGTKEMYVHTYEELVSLILKLKDIIC</sequence>
<proteinExistence type="evidence at protein level"/>
<protein>
    <recommendedName>
        <fullName>Low molecular weight protein-tyrosine-phosphatase PtpB</fullName>
        <ecNumber>3.1.3.48</ecNumber>
    </recommendedName>
    <alternativeName>
        <fullName>Phosphotyrosine phosphatase B</fullName>
        <shortName>PTPase B</shortName>
    </alternativeName>
</protein>
<evidence type="ECO:0000250" key="1">
    <source>
        <dbReference type="UniProtKB" id="P11064"/>
    </source>
</evidence>
<evidence type="ECO:0000269" key="2">
    <source>
    </source>
</evidence>
<evidence type="ECO:0000305" key="3"/>
<name>PTPB_STAAU</name>
<keyword id="KW-0378">Hydrolase</keyword>
<keyword id="KW-0904">Protein phosphatase</keyword>
<gene>
    <name type="primary">ptpB</name>
</gene>